<keyword id="KW-0007">Acetylation</keyword>
<keyword id="KW-0269">Exonuclease</keyword>
<keyword id="KW-0271">Exosome</keyword>
<keyword id="KW-0378">Hydrolase</keyword>
<keyword id="KW-0540">Nuclease</keyword>
<keyword id="KW-0539">Nucleus</keyword>
<keyword id="KW-1185">Reference proteome</keyword>
<keyword id="KW-0694">RNA-binding</keyword>
<keyword id="KW-0698">rRNA processing</keyword>
<reference key="1">
    <citation type="journal article" date="2000" name="Nature">
        <title>Sequence and analysis of chromosome 3 of the plant Arabidopsis thaliana.</title>
        <authorList>
            <person name="Salanoubat M."/>
            <person name="Lemcke K."/>
            <person name="Rieger M."/>
            <person name="Ansorge W."/>
            <person name="Unseld M."/>
            <person name="Fartmann B."/>
            <person name="Valle G."/>
            <person name="Bloecker H."/>
            <person name="Perez-Alonso M."/>
            <person name="Obermaier B."/>
            <person name="Delseny M."/>
            <person name="Boutry M."/>
            <person name="Grivell L.A."/>
            <person name="Mache R."/>
            <person name="Puigdomenech P."/>
            <person name="De Simone V."/>
            <person name="Choisne N."/>
            <person name="Artiguenave F."/>
            <person name="Robert C."/>
            <person name="Brottier P."/>
            <person name="Wincker P."/>
            <person name="Cattolico L."/>
            <person name="Weissenbach J."/>
            <person name="Saurin W."/>
            <person name="Quetier F."/>
            <person name="Schaefer M."/>
            <person name="Mueller-Auer S."/>
            <person name="Gabel C."/>
            <person name="Fuchs M."/>
            <person name="Benes V."/>
            <person name="Wurmbach E."/>
            <person name="Drzonek H."/>
            <person name="Erfle H."/>
            <person name="Jordan N."/>
            <person name="Bangert S."/>
            <person name="Wiedelmann R."/>
            <person name="Kranz H."/>
            <person name="Voss H."/>
            <person name="Holland R."/>
            <person name="Brandt P."/>
            <person name="Nyakatura G."/>
            <person name="Vezzi A."/>
            <person name="D'Angelo M."/>
            <person name="Pallavicini A."/>
            <person name="Toppo S."/>
            <person name="Simionati B."/>
            <person name="Conrad A."/>
            <person name="Hornischer K."/>
            <person name="Kauer G."/>
            <person name="Loehnert T.-H."/>
            <person name="Nordsiek G."/>
            <person name="Reichelt J."/>
            <person name="Scharfe M."/>
            <person name="Schoen O."/>
            <person name="Bargues M."/>
            <person name="Terol J."/>
            <person name="Climent J."/>
            <person name="Navarro P."/>
            <person name="Collado C."/>
            <person name="Perez-Perez A."/>
            <person name="Ottenwaelder B."/>
            <person name="Duchemin D."/>
            <person name="Cooke R."/>
            <person name="Laudie M."/>
            <person name="Berger-Llauro C."/>
            <person name="Purnelle B."/>
            <person name="Masuy D."/>
            <person name="de Haan M."/>
            <person name="Maarse A.C."/>
            <person name="Alcaraz J.-P."/>
            <person name="Cottet A."/>
            <person name="Casacuberta E."/>
            <person name="Monfort A."/>
            <person name="Argiriou A."/>
            <person name="Flores M."/>
            <person name="Liguori R."/>
            <person name="Vitale D."/>
            <person name="Mannhaupt G."/>
            <person name="Haase D."/>
            <person name="Schoof H."/>
            <person name="Rudd S."/>
            <person name="Zaccaria P."/>
            <person name="Mewes H.-W."/>
            <person name="Mayer K.F.X."/>
            <person name="Kaul S."/>
            <person name="Town C.D."/>
            <person name="Koo H.L."/>
            <person name="Tallon L.J."/>
            <person name="Jenkins J."/>
            <person name="Rooney T."/>
            <person name="Rizzo M."/>
            <person name="Walts A."/>
            <person name="Utterback T."/>
            <person name="Fujii C.Y."/>
            <person name="Shea T.P."/>
            <person name="Creasy T.H."/>
            <person name="Haas B."/>
            <person name="Maiti R."/>
            <person name="Wu D."/>
            <person name="Peterson J."/>
            <person name="Van Aken S."/>
            <person name="Pai G."/>
            <person name="Militscher J."/>
            <person name="Sellers P."/>
            <person name="Gill J.E."/>
            <person name="Feldblyum T.V."/>
            <person name="Preuss D."/>
            <person name="Lin X."/>
            <person name="Nierman W.C."/>
            <person name="Salzberg S.L."/>
            <person name="White O."/>
            <person name="Venter J.C."/>
            <person name="Fraser C.M."/>
            <person name="Kaneko T."/>
            <person name="Nakamura Y."/>
            <person name="Sato S."/>
            <person name="Kato T."/>
            <person name="Asamizu E."/>
            <person name="Sasamoto S."/>
            <person name="Kimura T."/>
            <person name="Idesawa K."/>
            <person name="Kawashima K."/>
            <person name="Kishida Y."/>
            <person name="Kiyokawa C."/>
            <person name="Kohara M."/>
            <person name="Matsumoto M."/>
            <person name="Matsuno A."/>
            <person name="Muraki A."/>
            <person name="Nakayama S."/>
            <person name="Nakazaki N."/>
            <person name="Shinpo S."/>
            <person name="Takeuchi C."/>
            <person name="Wada T."/>
            <person name="Watanabe A."/>
            <person name="Yamada M."/>
            <person name="Yasuda M."/>
            <person name="Tabata S."/>
        </authorList>
    </citation>
    <scope>NUCLEOTIDE SEQUENCE [LARGE SCALE GENOMIC DNA]</scope>
    <source>
        <strain>cv. Columbia</strain>
    </source>
</reference>
<reference key="2">
    <citation type="journal article" date="2017" name="Plant J.">
        <title>Araport11: a complete reannotation of the Arabidopsis thaliana reference genome.</title>
        <authorList>
            <person name="Cheng C.Y."/>
            <person name="Krishnakumar V."/>
            <person name="Chan A.P."/>
            <person name="Thibaud-Nissen F."/>
            <person name="Schobel S."/>
            <person name="Town C.D."/>
        </authorList>
    </citation>
    <scope>GENOME REANNOTATION</scope>
    <source>
        <strain>cv. Columbia</strain>
    </source>
</reference>
<reference key="3">
    <citation type="journal article" date="2003" name="Science">
        <title>Empirical analysis of transcriptional activity in the Arabidopsis genome.</title>
        <authorList>
            <person name="Yamada K."/>
            <person name="Lim J."/>
            <person name="Dale J.M."/>
            <person name="Chen H."/>
            <person name="Shinn P."/>
            <person name="Palm C.J."/>
            <person name="Southwick A.M."/>
            <person name="Wu H.C."/>
            <person name="Kim C.J."/>
            <person name="Nguyen M."/>
            <person name="Pham P.K."/>
            <person name="Cheuk R.F."/>
            <person name="Karlin-Newmann G."/>
            <person name="Liu S.X."/>
            <person name="Lam B."/>
            <person name="Sakano H."/>
            <person name="Wu T."/>
            <person name="Yu G."/>
            <person name="Miranda M."/>
            <person name="Quach H.L."/>
            <person name="Tripp M."/>
            <person name="Chang C.H."/>
            <person name="Lee J.M."/>
            <person name="Toriumi M.J."/>
            <person name="Chan M.M."/>
            <person name="Tang C.C."/>
            <person name="Onodera C.S."/>
            <person name="Deng J.M."/>
            <person name="Akiyama K."/>
            <person name="Ansari Y."/>
            <person name="Arakawa T."/>
            <person name="Banh J."/>
            <person name="Banno F."/>
            <person name="Bowser L."/>
            <person name="Brooks S.Y."/>
            <person name="Carninci P."/>
            <person name="Chao Q."/>
            <person name="Choy N."/>
            <person name="Enju A."/>
            <person name="Goldsmith A.D."/>
            <person name="Gurjal M."/>
            <person name="Hansen N.F."/>
            <person name="Hayashizaki Y."/>
            <person name="Johnson-Hopson C."/>
            <person name="Hsuan V.W."/>
            <person name="Iida K."/>
            <person name="Karnes M."/>
            <person name="Khan S."/>
            <person name="Koesema E."/>
            <person name="Ishida J."/>
            <person name="Jiang P.X."/>
            <person name="Jones T."/>
            <person name="Kawai J."/>
            <person name="Kamiya A."/>
            <person name="Meyers C."/>
            <person name="Nakajima M."/>
            <person name="Narusaka M."/>
            <person name="Seki M."/>
            <person name="Sakurai T."/>
            <person name="Satou M."/>
            <person name="Tamse R."/>
            <person name="Vaysberg M."/>
            <person name="Wallender E.K."/>
            <person name="Wong C."/>
            <person name="Yamamura Y."/>
            <person name="Yuan S."/>
            <person name="Shinozaki K."/>
            <person name="Davis R.W."/>
            <person name="Theologis A."/>
            <person name="Ecker J.R."/>
        </authorList>
    </citation>
    <scope>NUCLEOTIDE SEQUENCE [LARGE SCALE MRNA]</scope>
    <source>
        <strain>cv. Columbia</strain>
    </source>
</reference>
<reference key="4">
    <citation type="journal article" date="2009" name="DNA Res.">
        <title>Analysis of multiple occurrences of alternative splicing events in Arabidopsis thaliana using novel sequenced full-length cDNAs.</title>
        <authorList>
            <person name="Iida K."/>
            <person name="Fukami-Kobayashi K."/>
            <person name="Toyoda A."/>
            <person name="Sakaki Y."/>
            <person name="Kobayashi M."/>
            <person name="Seki M."/>
            <person name="Shinozaki K."/>
        </authorList>
    </citation>
    <scope>NUCLEOTIDE SEQUENCE [LARGE SCALE MRNA]</scope>
    <source>
        <strain>cv. Columbia</strain>
    </source>
</reference>
<reference key="5">
    <citation type="submission" date="2006-07" db="EMBL/GenBank/DDBJ databases">
        <title>Large-scale analysis of RIKEN Arabidopsis full-length (RAFL) cDNAs.</title>
        <authorList>
            <person name="Totoki Y."/>
            <person name="Seki M."/>
            <person name="Ishida J."/>
            <person name="Nakajima M."/>
            <person name="Enju A."/>
            <person name="Kamiya A."/>
            <person name="Narusaka M."/>
            <person name="Shin-i T."/>
            <person name="Nakagawa M."/>
            <person name="Sakamoto N."/>
            <person name="Oishi K."/>
            <person name="Kohara Y."/>
            <person name="Kobayashi M."/>
            <person name="Toyoda A."/>
            <person name="Sakaki Y."/>
            <person name="Sakurai T."/>
            <person name="Iida K."/>
            <person name="Akiyama K."/>
            <person name="Satou M."/>
            <person name="Toyoda T."/>
            <person name="Konagaya A."/>
            <person name="Carninci P."/>
            <person name="Kawai J."/>
            <person name="Hayashizaki Y."/>
            <person name="Shinozaki K."/>
        </authorList>
    </citation>
    <scope>NUCLEOTIDE SEQUENCE [LARGE SCALE MRNA]</scope>
    <source>
        <strain>cv. Columbia</strain>
    </source>
</reference>
<dbReference type="EC" id="3.1.13.-" evidence="3"/>
<dbReference type="EMBL" id="AL355775">
    <property type="protein sequence ID" value="CAB90948.1"/>
    <property type="molecule type" value="Genomic_DNA"/>
</dbReference>
<dbReference type="EMBL" id="CP002686">
    <property type="protein sequence ID" value="AEE78129.1"/>
    <property type="molecule type" value="Genomic_DNA"/>
</dbReference>
<dbReference type="EMBL" id="CP002686">
    <property type="protein sequence ID" value="AEE78130.1"/>
    <property type="molecule type" value="Genomic_DNA"/>
</dbReference>
<dbReference type="EMBL" id="CP002686">
    <property type="protein sequence ID" value="AEE78131.1"/>
    <property type="molecule type" value="Genomic_DNA"/>
</dbReference>
<dbReference type="EMBL" id="CP002686">
    <property type="protein sequence ID" value="AEE78132.1"/>
    <property type="molecule type" value="Genomic_DNA"/>
</dbReference>
<dbReference type="EMBL" id="CP002686">
    <property type="protein sequence ID" value="AEE78133.1"/>
    <property type="molecule type" value="Genomic_DNA"/>
</dbReference>
<dbReference type="EMBL" id="CP002686">
    <property type="protein sequence ID" value="AEE78134.1"/>
    <property type="molecule type" value="Genomic_DNA"/>
</dbReference>
<dbReference type="EMBL" id="CP002686">
    <property type="protein sequence ID" value="ANM63606.1"/>
    <property type="molecule type" value="Genomic_DNA"/>
</dbReference>
<dbReference type="EMBL" id="BT003125">
    <property type="protein sequence ID" value="AAO24557.1"/>
    <property type="molecule type" value="mRNA"/>
</dbReference>
<dbReference type="EMBL" id="AK317261">
    <property type="protein sequence ID" value="BAH19939.1"/>
    <property type="molecule type" value="mRNA"/>
</dbReference>
<dbReference type="EMBL" id="AK317537">
    <property type="protein sequence ID" value="BAH20201.1"/>
    <property type="molecule type" value="mRNA"/>
</dbReference>
<dbReference type="EMBL" id="AK228171">
    <property type="protein sequence ID" value="BAF00127.1"/>
    <property type="molecule type" value="mRNA"/>
</dbReference>
<dbReference type="PIR" id="T49262">
    <property type="entry name" value="T49262"/>
</dbReference>
<dbReference type="RefSeq" id="NP_001030817.1">
    <property type="nucleotide sequence ID" value="NM_001035740.3"/>
</dbReference>
<dbReference type="RefSeq" id="NP_001030818.1">
    <property type="nucleotide sequence ID" value="NM_001035741.2"/>
</dbReference>
<dbReference type="RefSeq" id="NP_001030819.1">
    <property type="nucleotide sequence ID" value="NM_001035742.3"/>
</dbReference>
<dbReference type="RefSeq" id="NP_001078250.1">
    <property type="nucleotide sequence ID" value="NM_001084781.2"/>
</dbReference>
<dbReference type="RefSeq" id="NP_001190019.1">
    <property type="nucleotide sequence ID" value="NM_001203090.1"/>
</dbReference>
<dbReference type="RefSeq" id="NP_001325681.1">
    <property type="nucleotide sequence ID" value="NM_001339242.1"/>
</dbReference>
<dbReference type="RefSeq" id="NP_190207.1">
    <property type="nucleotide sequence ID" value="NM_114490.3"/>
</dbReference>
<dbReference type="SMR" id="Q9LX74"/>
<dbReference type="FunCoup" id="Q9LX74">
    <property type="interactions" value="2040"/>
</dbReference>
<dbReference type="IntAct" id="Q9LX74">
    <property type="interactions" value="2"/>
</dbReference>
<dbReference type="STRING" id="3702.Q9LX74"/>
<dbReference type="iPTMnet" id="Q9LX74"/>
<dbReference type="PaxDb" id="3702-AT3G46210.6"/>
<dbReference type="ProteomicsDB" id="222335"/>
<dbReference type="EnsemblPlants" id="AT3G46210.1">
    <property type="protein sequence ID" value="AT3G46210.1"/>
    <property type="gene ID" value="AT3G46210"/>
</dbReference>
<dbReference type="EnsemblPlants" id="AT3G46210.2">
    <property type="protein sequence ID" value="AT3G46210.2"/>
    <property type="gene ID" value="AT3G46210"/>
</dbReference>
<dbReference type="EnsemblPlants" id="AT3G46210.3">
    <property type="protein sequence ID" value="AT3G46210.3"/>
    <property type="gene ID" value="AT3G46210"/>
</dbReference>
<dbReference type="EnsemblPlants" id="AT3G46210.4">
    <property type="protein sequence ID" value="AT3G46210.4"/>
    <property type="gene ID" value="AT3G46210"/>
</dbReference>
<dbReference type="EnsemblPlants" id="AT3G46210.5">
    <property type="protein sequence ID" value="AT3G46210.5"/>
    <property type="gene ID" value="AT3G46210"/>
</dbReference>
<dbReference type="EnsemblPlants" id="AT3G46210.6">
    <property type="protein sequence ID" value="AT3G46210.6"/>
    <property type="gene ID" value="AT3G46210"/>
</dbReference>
<dbReference type="EnsemblPlants" id="AT3G46210.7">
    <property type="protein sequence ID" value="AT3G46210.7"/>
    <property type="gene ID" value="AT3G46210"/>
</dbReference>
<dbReference type="GeneID" id="823766"/>
<dbReference type="Gramene" id="AT3G46210.1">
    <property type="protein sequence ID" value="AT3G46210.1"/>
    <property type="gene ID" value="AT3G46210"/>
</dbReference>
<dbReference type="Gramene" id="AT3G46210.2">
    <property type="protein sequence ID" value="AT3G46210.2"/>
    <property type="gene ID" value="AT3G46210"/>
</dbReference>
<dbReference type="Gramene" id="AT3G46210.3">
    <property type="protein sequence ID" value="AT3G46210.3"/>
    <property type="gene ID" value="AT3G46210"/>
</dbReference>
<dbReference type="Gramene" id="AT3G46210.4">
    <property type="protein sequence ID" value="AT3G46210.4"/>
    <property type="gene ID" value="AT3G46210"/>
</dbReference>
<dbReference type="Gramene" id="AT3G46210.5">
    <property type="protein sequence ID" value="AT3G46210.5"/>
    <property type="gene ID" value="AT3G46210"/>
</dbReference>
<dbReference type="Gramene" id="AT3G46210.6">
    <property type="protein sequence ID" value="AT3G46210.6"/>
    <property type="gene ID" value="AT3G46210"/>
</dbReference>
<dbReference type="Gramene" id="AT3G46210.7">
    <property type="protein sequence ID" value="AT3G46210.7"/>
    <property type="gene ID" value="AT3G46210"/>
</dbReference>
<dbReference type="KEGG" id="ath:AT3G46210"/>
<dbReference type="Araport" id="AT3G46210"/>
<dbReference type="TAIR" id="AT3G46210"/>
<dbReference type="eggNOG" id="KOG1069">
    <property type="taxonomic scope" value="Eukaryota"/>
</dbReference>
<dbReference type="HOGENOM" id="CLU_063514_2_3_1"/>
<dbReference type="InParanoid" id="Q9LX74"/>
<dbReference type="OMA" id="CIINEQG"/>
<dbReference type="PhylomeDB" id="Q9LX74"/>
<dbReference type="CD-CODE" id="4299E36E">
    <property type="entry name" value="Nucleolus"/>
</dbReference>
<dbReference type="PRO" id="PR:Q9LX74"/>
<dbReference type="Proteomes" id="UP000006548">
    <property type="component" value="Chromosome 3"/>
</dbReference>
<dbReference type="ExpressionAtlas" id="Q9LX74">
    <property type="expression patterns" value="baseline and differential"/>
</dbReference>
<dbReference type="GO" id="GO:0000178">
    <property type="term" value="C:exosome (RNase complex)"/>
    <property type="evidence" value="ECO:0007669"/>
    <property type="project" value="UniProtKB-KW"/>
</dbReference>
<dbReference type="GO" id="GO:0005730">
    <property type="term" value="C:nucleolus"/>
    <property type="evidence" value="ECO:0007669"/>
    <property type="project" value="UniProtKB-SubCell"/>
</dbReference>
<dbReference type="GO" id="GO:0004536">
    <property type="term" value="F:DNA nuclease activity"/>
    <property type="evidence" value="ECO:0007669"/>
    <property type="project" value="EnsemblPlants"/>
</dbReference>
<dbReference type="GO" id="GO:0003690">
    <property type="term" value="F:double-stranded DNA binding"/>
    <property type="evidence" value="ECO:0007669"/>
    <property type="project" value="EnsemblPlants"/>
</dbReference>
<dbReference type="GO" id="GO:0004527">
    <property type="term" value="F:exonuclease activity"/>
    <property type="evidence" value="ECO:0007669"/>
    <property type="project" value="UniProtKB-KW"/>
</dbReference>
<dbReference type="GO" id="GO:0042802">
    <property type="term" value="F:identical protein binding"/>
    <property type="evidence" value="ECO:0007669"/>
    <property type="project" value="EnsemblPlants"/>
</dbReference>
<dbReference type="GO" id="GO:0004540">
    <property type="term" value="F:RNA nuclease activity"/>
    <property type="evidence" value="ECO:0007669"/>
    <property type="project" value="EnsemblPlants"/>
</dbReference>
<dbReference type="GO" id="GO:0003727">
    <property type="term" value="F:single-stranded RNA binding"/>
    <property type="evidence" value="ECO:0007669"/>
    <property type="project" value="EnsemblPlants"/>
</dbReference>
<dbReference type="GO" id="GO:0006364">
    <property type="term" value="P:rRNA processing"/>
    <property type="evidence" value="ECO:0007669"/>
    <property type="project" value="UniProtKB-KW"/>
</dbReference>
<dbReference type="CDD" id="cd11372">
    <property type="entry name" value="RNase_PH_RRP46"/>
    <property type="match status" value="1"/>
</dbReference>
<dbReference type="FunFam" id="3.30.230.70:FF:000021">
    <property type="entry name" value="Exosome complex exonuclease RRP46 homolog"/>
    <property type="match status" value="1"/>
</dbReference>
<dbReference type="Gene3D" id="3.30.230.70">
    <property type="entry name" value="GHMP Kinase, N-terminal domain"/>
    <property type="match status" value="1"/>
</dbReference>
<dbReference type="InterPro" id="IPR001247">
    <property type="entry name" value="ExoRNase_PH_dom1"/>
</dbReference>
<dbReference type="InterPro" id="IPR036345">
    <property type="entry name" value="ExoRNase_PH_dom2_sf"/>
</dbReference>
<dbReference type="InterPro" id="IPR027408">
    <property type="entry name" value="PNPase/RNase_PH_dom_sf"/>
</dbReference>
<dbReference type="InterPro" id="IPR020568">
    <property type="entry name" value="Ribosomal_Su5_D2-typ_SF"/>
</dbReference>
<dbReference type="InterPro" id="IPR050080">
    <property type="entry name" value="RNase_PH"/>
</dbReference>
<dbReference type="PANTHER" id="PTHR11953">
    <property type="entry name" value="EXOSOME COMPLEX COMPONENT"/>
    <property type="match status" value="1"/>
</dbReference>
<dbReference type="PANTHER" id="PTHR11953:SF1">
    <property type="entry name" value="EXOSOME COMPLEX COMPONENT RRP46"/>
    <property type="match status" value="1"/>
</dbReference>
<dbReference type="Pfam" id="PF01138">
    <property type="entry name" value="RNase_PH"/>
    <property type="match status" value="1"/>
</dbReference>
<dbReference type="SUPFAM" id="SSF55666">
    <property type="entry name" value="Ribonuclease PH domain 2-like"/>
    <property type="match status" value="1"/>
</dbReference>
<dbReference type="SUPFAM" id="SSF54211">
    <property type="entry name" value="Ribosomal protein S5 domain 2-like"/>
    <property type="match status" value="1"/>
</dbReference>
<proteinExistence type="evidence at transcript level"/>
<gene>
    <name evidence="3" type="primary">RRP46</name>
    <name evidence="4" type="ordered locus">At3g46210</name>
    <name evidence="5" type="ORF">F12M12.180</name>
</gene>
<evidence type="ECO:0000250" key="1">
    <source>
        <dbReference type="UniProtKB" id="Q84T68"/>
    </source>
</evidence>
<evidence type="ECO:0000250" key="2">
    <source>
        <dbReference type="UniProtKB" id="Q9SP08"/>
    </source>
</evidence>
<evidence type="ECO:0000305" key="3"/>
<evidence type="ECO:0000312" key="4">
    <source>
        <dbReference type="Araport" id="AT3G46210"/>
    </source>
</evidence>
<evidence type="ECO:0000312" key="5">
    <source>
        <dbReference type="EMBL" id="CAB90948.1"/>
    </source>
</evidence>
<sequence length="239" mass="25810">MEIDREDGRTPNQLRPLACSRNILHRPHGSASWSQGDTKVLAAVYGPKAGTKKNENAEKACFEVIWKPKSGQIGKVEKEYEMILKRTIQSICVLTVNPNTTTSVIIQVVHDDGSLLPCAINAACAALVDAGIPMKHLAVAICCCLAENGYLVLDPNKLEEKKMTAFAYLVFPNTTLSVLPEGSSVAEGEPVEHGIITSITHGVMSVDDYFLCVENGRAATASLSAFFRKNFQQSSSKAG</sequence>
<feature type="chain" id="PRO_0000435320" description="Exosome complex exonuclease RRP46 homolog">
    <location>
        <begin position="1"/>
        <end position="239"/>
    </location>
</feature>
<feature type="modified residue" description="N-acetylmethionine" evidence="2">
    <location>
        <position position="1"/>
    </location>
</feature>
<accession>Q9LX74</accession>
<organism>
    <name type="scientific">Arabidopsis thaliana</name>
    <name type="common">Mouse-ear cress</name>
    <dbReference type="NCBI Taxonomy" id="3702"/>
    <lineage>
        <taxon>Eukaryota</taxon>
        <taxon>Viridiplantae</taxon>
        <taxon>Streptophyta</taxon>
        <taxon>Embryophyta</taxon>
        <taxon>Tracheophyta</taxon>
        <taxon>Spermatophyta</taxon>
        <taxon>Magnoliopsida</taxon>
        <taxon>eudicotyledons</taxon>
        <taxon>Gunneridae</taxon>
        <taxon>Pentapetalae</taxon>
        <taxon>rosids</taxon>
        <taxon>malvids</taxon>
        <taxon>Brassicales</taxon>
        <taxon>Brassicaceae</taxon>
        <taxon>Camelineae</taxon>
        <taxon>Arabidopsis</taxon>
    </lineage>
</organism>
<comment type="function">
    <text evidence="1">Probable component of the exosome 3'-&gt;5' exoribonuclease complex, a complex that degrades inherently unstable mRNAs containing AU-rich elements (AREs) within their 3'-untranslated regions.</text>
</comment>
<comment type="subunit">
    <text evidence="1">Probable component of the RNA exosome complex.</text>
</comment>
<comment type="subcellular location">
    <subcellularLocation>
        <location evidence="1">Nucleus</location>
        <location evidence="1">Nucleolus</location>
    </subcellularLocation>
</comment>
<comment type="similarity">
    <text evidence="3">Belongs to the RNase PH family.</text>
</comment>
<name>EXOS5_ARATH</name>
<protein>
    <recommendedName>
        <fullName evidence="3">Exosome complex exonuclease RRP46 homolog</fullName>
        <ecNumber evidence="3">3.1.13.-</ecNumber>
    </recommendedName>
    <alternativeName>
        <fullName evidence="3">Exosome component 5</fullName>
    </alternativeName>
    <alternativeName>
        <fullName evidence="3">Ribosomal RNA-processing protein 46</fullName>
    </alternativeName>
</protein>